<evidence type="ECO:0000255" key="1">
    <source>
        <dbReference type="HAMAP-Rule" id="MF_00627"/>
    </source>
</evidence>
<organism>
    <name type="scientific">Yersinia pseudotuberculosis serotype IB (strain PB1/+)</name>
    <dbReference type="NCBI Taxonomy" id="502801"/>
    <lineage>
        <taxon>Bacteria</taxon>
        <taxon>Pseudomonadati</taxon>
        <taxon>Pseudomonadota</taxon>
        <taxon>Gammaproteobacteria</taxon>
        <taxon>Enterobacterales</taxon>
        <taxon>Yersiniaceae</taxon>
        <taxon>Yersinia</taxon>
    </lineage>
</organism>
<name>TDH_YERPB</name>
<gene>
    <name evidence="1" type="primary">tdh</name>
    <name type="ordered locus">YPTS_0059</name>
</gene>
<dbReference type="EC" id="1.1.1.103" evidence="1"/>
<dbReference type="EMBL" id="CP001048">
    <property type="protein sequence ID" value="ACC87058.1"/>
    <property type="molecule type" value="Genomic_DNA"/>
</dbReference>
<dbReference type="RefSeq" id="WP_011191451.1">
    <property type="nucleotide sequence ID" value="NZ_CP009780.1"/>
</dbReference>
<dbReference type="SMR" id="B2JYP4"/>
<dbReference type="GeneID" id="96663541"/>
<dbReference type="KEGG" id="ypb:YPTS_0059"/>
<dbReference type="PATRIC" id="fig|502801.10.peg.3735"/>
<dbReference type="UniPathway" id="UPA00046">
    <property type="reaction ID" value="UER00505"/>
</dbReference>
<dbReference type="GO" id="GO:0005737">
    <property type="term" value="C:cytoplasm"/>
    <property type="evidence" value="ECO:0007669"/>
    <property type="project" value="UniProtKB-SubCell"/>
</dbReference>
<dbReference type="GO" id="GO:0008743">
    <property type="term" value="F:L-threonine 3-dehydrogenase activity"/>
    <property type="evidence" value="ECO:0007669"/>
    <property type="project" value="UniProtKB-UniRule"/>
</dbReference>
<dbReference type="GO" id="GO:0008270">
    <property type="term" value="F:zinc ion binding"/>
    <property type="evidence" value="ECO:0007669"/>
    <property type="project" value="UniProtKB-UniRule"/>
</dbReference>
<dbReference type="GO" id="GO:0019518">
    <property type="term" value="P:L-threonine catabolic process to glycine"/>
    <property type="evidence" value="ECO:0007669"/>
    <property type="project" value="UniProtKB-UniPathway"/>
</dbReference>
<dbReference type="FunFam" id="3.40.50.720:FF:000059">
    <property type="entry name" value="L-threonine 3-dehydrogenase"/>
    <property type="match status" value="1"/>
</dbReference>
<dbReference type="Gene3D" id="3.90.180.10">
    <property type="entry name" value="Medium-chain alcohol dehydrogenases, catalytic domain"/>
    <property type="match status" value="1"/>
</dbReference>
<dbReference type="Gene3D" id="3.40.50.720">
    <property type="entry name" value="NAD(P)-binding Rossmann-like Domain"/>
    <property type="match status" value="1"/>
</dbReference>
<dbReference type="HAMAP" id="MF_00627">
    <property type="entry name" value="Thr_dehydrog"/>
    <property type="match status" value="1"/>
</dbReference>
<dbReference type="InterPro" id="IPR013149">
    <property type="entry name" value="ADH-like_C"/>
</dbReference>
<dbReference type="InterPro" id="IPR013154">
    <property type="entry name" value="ADH-like_N"/>
</dbReference>
<dbReference type="InterPro" id="IPR002328">
    <property type="entry name" value="ADH_Zn_CS"/>
</dbReference>
<dbReference type="InterPro" id="IPR011032">
    <property type="entry name" value="GroES-like_sf"/>
</dbReference>
<dbReference type="InterPro" id="IPR004627">
    <property type="entry name" value="L-Threonine_3-DHase"/>
</dbReference>
<dbReference type="InterPro" id="IPR036291">
    <property type="entry name" value="NAD(P)-bd_dom_sf"/>
</dbReference>
<dbReference type="InterPro" id="IPR020843">
    <property type="entry name" value="PKS_ER"/>
</dbReference>
<dbReference type="InterPro" id="IPR050129">
    <property type="entry name" value="Zn_alcohol_dh"/>
</dbReference>
<dbReference type="NCBIfam" id="NF003808">
    <property type="entry name" value="PRK05396.1"/>
    <property type="match status" value="1"/>
</dbReference>
<dbReference type="NCBIfam" id="TIGR00692">
    <property type="entry name" value="tdh"/>
    <property type="match status" value="1"/>
</dbReference>
<dbReference type="PANTHER" id="PTHR43401">
    <property type="entry name" value="L-THREONINE 3-DEHYDROGENASE"/>
    <property type="match status" value="1"/>
</dbReference>
<dbReference type="PANTHER" id="PTHR43401:SF2">
    <property type="entry name" value="L-THREONINE 3-DEHYDROGENASE"/>
    <property type="match status" value="1"/>
</dbReference>
<dbReference type="Pfam" id="PF08240">
    <property type="entry name" value="ADH_N"/>
    <property type="match status" value="1"/>
</dbReference>
<dbReference type="Pfam" id="PF00107">
    <property type="entry name" value="ADH_zinc_N"/>
    <property type="match status" value="1"/>
</dbReference>
<dbReference type="SMART" id="SM00829">
    <property type="entry name" value="PKS_ER"/>
    <property type="match status" value="1"/>
</dbReference>
<dbReference type="SUPFAM" id="SSF50129">
    <property type="entry name" value="GroES-like"/>
    <property type="match status" value="1"/>
</dbReference>
<dbReference type="SUPFAM" id="SSF51735">
    <property type="entry name" value="NAD(P)-binding Rossmann-fold domains"/>
    <property type="match status" value="1"/>
</dbReference>
<dbReference type="PROSITE" id="PS00059">
    <property type="entry name" value="ADH_ZINC"/>
    <property type="match status" value="1"/>
</dbReference>
<protein>
    <recommendedName>
        <fullName evidence="1">L-threonine 3-dehydrogenase</fullName>
        <shortName evidence="1">TDH</shortName>
        <ecNumber evidence="1">1.1.1.103</ecNumber>
    </recommendedName>
</protein>
<reference key="1">
    <citation type="submission" date="2008-04" db="EMBL/GenBank/DDBJ databases">
        <title>Complete sequence of Yersinia pseudotuberculosis PB1/+.</title>
        <authorList>
            <person name="Copeland A."/>
            <person name="Lucas S."/>
            <person name="Lapidus A."/>
            <person name="Glavina del Rio T."/>
            <person name="Dalin E."/>
            <person name="Tice H."/>
            <person name="Bruce D."/>
            <person name="Goodwin L."/>
            <person name="Pitluck S."/>
            <person name="Munk A.C."/>
            <person name="Brettin T."/>
            <person name="Detter J.C."/>
            <person name="Han C."/>
            <person name="Tapia R."/>
            <person name="Schmutz J."/>
            <person name="Larimer F."/>
            <person name="Land M."/>
            <person name="Hauser L."/>
            <person name="Challacombe J.F."/>
            <person name="Green L."/>
            <person name="Lindler L.E."/>
            <person name="Nikolich M.P."/>
            <person name="Richardson P."/>
        </authorList>
    </citation>
    <scope>NUCLEOTIDE SEQUENCE [LARGE SCALE GENOMIC DNA]</scope>
    <source>
        <strain>PB1/+</strain>
    </source>
</reference>
<feature type="chain" id="PRO_1000130573" description="L-threonine 3-dehydrogenase">
    <location>
        <begin position="1"/>
        <end position="341"/>
    </location>
</feature>
<feature type="active site" description="Charge relay system" evidence="1">
    <location>
        <position position="40"/>
    </location>
</feature>
<feature type="active site" description="Charge relay system" evidence="1">
    <location>
        <position position="43"/>
    </location>
</feature>
<feature type="binding site" evidence="1">
    <location>
        <position position="38"/>
    </location>
    <ligand>
        <name>Zn(2+)</name>
        <dbReference type="ChEBI" id="CHEBI:29105"/>
        <label>1</label>
        <note>catalytic</note>
    </ligand>
</feature>
<feature type="binding site" evidence="1">
    <location>
        <position position="63"/>
    </location>
    <ligand>
        <name>Zn(2+)</name>
        <dbReference type="ChEBI" id="CHEBI:29105"/>
        <label>1</label>
        <note>catalytic</note>
    </ligand>
</feature>
<feature type="binding site" evidence="1">
    <location>
        <position position="64"/>
    </location>
    <ligand>
        <name>Zn(2+)</name>
        <dbReference type="ChEBI" id="CHEBI:29105"/>
        <label>1</label>
        <note>catalytic</note>
    </ligand>
</feature>
<feature type="binding site" evidence="1">
    <location>
        <position position="93"/>
    </location>
    <ligand>
        <name>Zn(2+)</name>
        <dbReference type="ChEBI" id="CHEBI:29105"/>
        <label>2</label>
    </ligand>
</feature>
<feature type="binding site" evidence="1">
    <location>
        <position position="96"/>
    </location>
    <ligand>
        <name>Zn(2+)</name>
        <dbReference type="ChEBI" id="CHEBI:29105"/>
        <label>2</label>
    </ligand>
</feature>
<feature type="binding site" evidence="1">
    <location>
        <position position="99"/>
    </location>
    <ligand>
        <name>Zn(2+)</name>
        <dbReference type="ChEBI" id="CHEBI:29105"/>
        <label>2</label>
    </ligand>
</feature>
<feature type="binding site" evidence="1">
    <location>
        <position position="107"/>
    </location>
    <ligand>
        <name>Zn(2+)</name>
        <dbReference type="ChEBI" id="CHEBI:29105"/>
        <label>2</label>
    </ligand>
</feature>
<feature type="binding site" evidence="1">
    <location>
        <position position="175"/>
    </location>
    <ligand>
        <name>NAD(+)</name>
        <dbReference type="ChEBI" id="CHEBI:57540"/>
    </ligand>
</feature>
<feature type="binding site" evidence="1">
    <location>
        <position position="195"/>
    </location>
    <ligand>
        <name>NAD(+)</name>
        <dbReference type="ChEBI" id="CHEBI:57540"/>
    </ligand>
</feature>
<feature type="binding site" evidence="1">
    <location>
        <position position="200"/>
    </location>
    <ligand>
        <name>NAD(+)</name>
        <dbReference type="ChEBI" id="CHEBI:57540"/>
    </ligand>
</feature>
<feature type="binding site" evidence="1">
    <location>
        <begin position="262"/>
        <end position="264"/>
    </location>
    <ligand>
        <name>NAD(+)</name>
        <dbReference type="ChEBI" id="CHEBI:57540"/>
    </ligand>
</feature>
<feature type="binding site" evidence="1">
    <location>
        <begin position="286"/>
        <end position="287"/>
    </location>
    <ligand>
        <name>NAD(+)</name>
        <dbReference type="ChEBI" id="CHEBI:57540"/>
    </ligand>
</feature>
<feature type="site" description="Important for catalytic activity for the proton relay mechanism but does not participate directly in the coordination of zinc atom" evidence="1">
    <location>
        <position position="148"/>
    </location>
</feature>
<sequence length="341" mass="37333">MKALSKLKAEEGIWMTDVPQPELGHNDIMIKIRKTAICGTDVHIYNWDEWSQKTIPVPMVVGHEYVGEVVAIGQEVKGFNIGDRVSGEGHITCGHCRNCRGGRTHLCRNTVGVGVNRPGSFAEYLVIPAFNAFKIPDNISDELAAIFDPFGNAVHTALSFDLVGEDVLVSGAGPIGIMAAAVCKHVGARHVVITDVNEYRLDLARKMGVTRAVNVSKENLNDVMTELGMTEGFDVGLEMSGAPPAFRSLLNSMNHGGRIAMLGIPPSDMSIDWNQVIFKGLFIKGIYGREMFETWYKMAALIQSGLDLTPIITHRFPIDEFQQGFDAMRSGKSGKVVLSWD</sequence>
<keyword id="KW-0963">Cytoplasm</keyword>
<keyword id="KW-0479">Metal-binding</keyword>
<keyword id="KW-0520">NAD</keyword>
<keyword id="KW-0560">Oxidoreductase</keyword>
<keyword id="KW-0862">Zinc</keyword>
<proteinExistence type="inferred from homology"/>
<comment type="function">
    <text evidence="1">Catalyzes the NAD(+)-dependent oxidation of L-threonine to 2-amino-3-ketobutyrate.</text>
</comment>
<comment type="catalytic activity">
    <reaction evidence="1">
        <text>L-threonine + NAD(+) = (2S)-2-amino-3-oxobutanoate + NADH + H(+)</text>
        <dbReference type="Rhea" id="RHEA:13161"/>
        <dbReference type="ChEBI" id="CHEBI:15378"/>
        <dbReference type="ChEBI" id="CHEBI:57540"/>
        <dbReference type="ChEBI" id="CHEBI:57926"/>
        <dbReference type="ChEBI" id="CHEBI:57945"/>
        <dbReference type="ChEBI" id="CHEBI:78948"/>
        <dbReference type="EC" id="1.1.1.103"/>
    </reaction>
</comment>
<comment type="cofactor">
    <cofactor evidence="1">
        <name>Zn(2+)</name>
        <dbReference type="ChEBI" id="CHEBI:29105"/>
    </cofactor>
    <text evidence="1">Binds 2 Zn(2+) ions per subunit.</text>
</comment>
<comment type="pathway">
    <text evidence="1">Amino-acid degradation; L-threonine degradation via oxydo-reductase pathway; glycine from L-threonine: step 1/2.</text>
</comment>
<comment type="subunit">
    <text evidence="1">Homotetramer.</text>
</comment>
<comment type="subcellular location">
    <subcellularLocation>
        <location evidence="1">Cytoplasm</location>
    </subcellularLocation>
</comment>
<comment type="similarity">
    <text evidence="1">Belongs to the zinc-containing alcohol dehydrogenase family.</text>
</comment>
<accession>B2JYP4</accession>